<gene>
    <name evidence="1" type="primary">orn</name>
    <name type="ordered locus">EcE24377A_4719</name>
</gene>
<comment type="function">
    <text evidence="1">3'-to-5' exoribonuclease specific for small oligoribonucleotides.</text>
</comment>
<comment type="subunit">
    <text evidence="1">Homodimer.</text>
</comment>
<comment type="subcellular location">
    <subcellularLocation>
        <location evidence="1">Cytoplasm</location>
    </subcellularLocation>
</comment>
<comment type="similarity">
    <text evidence="1">Belongs to the oligoribonuclease family.</text>
</comment>
<organism>
    <name type="scientific">Escherichia coli O139:H28 (strain E24377A / ETEC)</name>
    <dbReference type="NCBI Taxonomy" id="331111"/>
    <lineage>
        <taxon>Bacteria</taxon>
        <taxon>Pseudomonadati</taxon>
        <taxon>Pseudomonadota</taxon>
        <taxon>Gammaproteobacteria</taxon>
        <taxon>Enterobacterales</taxon>
        <taxon>Enterobacteriaceae</taxon>
        <taxon>Escherichia</taxon>
    </lineage>
</organism>
<accession>A7ZV33</accession>
<reference key="1">
    <citation type="journal article" date="2008" name="J. Bacteriol.">
        <title>The pangenome structure of Escherichia coli: comparative genomic analysis of E. coli commensal and pathogenic isolates.</title>
        <authorList>
            <person name="Rasko D.A."/>
            <person name="Rosovitz M.J."/>
            <person name="Myers G.S.A."/>
            <person name="Mongodin E.F."/>
            <person name="Fricke W.F."/>
            <person name="Gajer P."/>
            <person name="Crabtree J."/>
            <person name="Sebaihia M."/>
            <person name="Thomson N.R."/>
            <person name="Chaudhuri R."/>
            <person name="Henderson I.R."/>
            <person name="Sperandio V."/>
            <person name="Ravel J."/>
        </authorList>
    </citation>
    <scope>NUCLEOTIDE SEQUENCE [LARGE SCALE GENOMIC DNA]</scope>
    <source>
        <strain>E24377A / ETEC</strain>
    </source>
</reference>
<name>ORN_ECO24</name>
<feature type="chain" id="PRO_1000057309" description="Oligoribonuclease">
    <location>
        <begin position="1"/>
        <end position="181"/>
    </location>
</feature>
<feature type="domain" description="Exonuclease" evidence="1">
    <location>
        <begin position="8"/>
        <end position="171"/>
    </location>
</feature>
<feature type="active site" evidence="1">
    <location>
        <position position="129"/>
    </location>
</feature>
<proteinExistence type="inferred from homology"/>
<sequence length="181" mass="20816">MSANENNLIWIDLEMTGLDPERDRIIEIATLVTDANLNILAEGPTIAVHQSDEQLALMDDWNVRTHTASGLVERVKASTMGDREAELATLEFLKQWVPAGKSPICGNSIGQDRRFLFKYMPELEAYFHYRYLDVSTLKELARRWKPEILDGFTKQGTHQAMDDIRESVAELAYYREHFIKL</sequence>
<protein>
    <recommendedName>
        <fullName evidence="1">Oligoribonuclease</fullName>
        <ecNumber evidence="1">3.1.15.-</ecNumber>
    </recommendedName>
</protein>
<evidence type="ECO:0000255" key="1">
    <source>
        <dbReference type="HAMAP-Rule" id="MF_00045"/>
    </source>
</evidence>
<dbReference type="EC" id="3.1.15.-" evidence="1"/>
<dbReference type="EMBL" id="CP000800">
    <property type="protein sequence ID" value="ABV17604.1"/>
    <property type="molecule type" value="Genomic_DNA"/>
</dbReference>
<dbReference type="RefSeq" id="WP_001295188.1">
    <property type="nucleotide sequence ID" value="NC_009801.1"/>
</dbReference>
<dbReference type="SMR" id="A7ZV33"/>
<dbReference type="GeneID" id="93777660"/>
<dbReference type="KEGG" id="ecw:EcE24377A_4719"/>
<dbReference type="HOGENOM" id="CLU_064761_2_0_6"/>
<dbReference type="Proteomes" id="UP000001122">
    <property type="component" value="Chromosome"/>
</dbReference>
<dbReference type="GO" id="GO:0005737">
    <property type="term" value="C:cytoplasm"/>
    <property type="evidence" value="ECO:0007669"/>
    <property type="project" value="UniProtKB-SubCell"/>
</dbReference>
<dbReference type="GO" id="GO:0000175">
    <property type="term" value="F:3'-5'-RNA exonuclease activity"/>
    <property type="evidence" value="ECO:0007669"/>
    <property type="project" value="InterPro"/>
</dbReference>
<dbReference type="GO" id="GO:0003676">
    <property type="term" value="F:nucleic acid binding"/>
    <property type="evidence" value="ECO:0007669"/>
    <property type="project" value="InterPro"/>
</dbReference>
<dbReference type="GO" id="GO:0006259">
    <property type="term" value="P:DNA metabolic process"/>
    <property type="evidence" value="ECO:0007669"/>
    <property type="project" value="UniProtKB-ARBA"/>
</dbReference>
<dbReference type="CDD" id="cd06135">
    <property type="entry name" value="Orn"/>
    <property type="match status" value="1"/>
</dbReference>
<dbReference type="FunFam" id="3.30.420.10:FF:000003">
    <property type="entry name" value="Oligoribonuclease"/>
    <property type="match status" value="1"/>
</dbReference>
<dbReference type="Gene3D" id="3.30.420.10">
    <property type="entry name" value="Ribonuclease H-like superfamily/Ribonuclease H"/>
    <property type="match status" value="1"/>
</dbReference>
<dbReference type="HAMAP" id="MF_00045">
    <property type="entry name" value="Oligoribonuclease"/>
    <property type="match status" value="1"/>
</dbReference>
<dbReference type="InterPro" id="IPR013520">
    <property type="entry name" value="Exonuclease_RNaseT/DNA_pol3"/>
</dbReference>
<dbReference type="InterPro" id="IPR022894">
    <property type="entry name" value="Oligoribonuclease"/>
</dbReference>
<dbReference type="InterPro" id="IPR012337">
    <property type="entry name" value="RNaseH-like_sf"/>
</dbReference>
<dbReference type="InterPro" id="IPR036397">
    <property type="entry name" value="RNaseH_sf"/>
</dbReference>
<dbReference type="NCBIfam" id="NF003765">
    <property type="entry name" value="PRK05359.1"/>
    <property type="match status" value="1"/>
</dbReference>
<dbReference type="PANTHER" id="PTHR11046">
    <property type="entry name" value="OLIGORIBONUCLEASE, MITOCHONDRIAL"/>
    <property type="match status" value="1"/>
</dbReference>
<dbReference type="PANTHER" id="PTHR11046:SF0">
    <property type="entry name" value="OLIGORIBONUCLEASE, MITOCHONDRIAL"/>
    <property type="match status" value="1"/>
</dbReference>
<dbReference type="Pfam" id="PF00929">
    <property type="entry name" value="RNase_T"/>
    <property type="match status" value="1"/>
</dbReference>
<dbReference type="SMART" id="SM00479">
    <property type="entry name" value="EXOIII"/>
    <property type="match status" value="1"/>
</dbReference>
<dbReference type="SUPFAM" id="SSF53098">
    <property type="entry name" value="Ribonuclease H-like"/>
    <property type="match status" value="1"/>
</dbReference>
<keyword id="KW-0963">Cytoplasm</keyword>
<keyword id="KW-0269">Exonuclease</keyword>
<keyword id="KW-0378">Hydrolase</keyword>
<keyword id="KW-0540">Nuclease</keyword>
<keyword id="KW-1185">Reference proteome</keyword>